<dbReference type="EMBL" id="AE001363">
    <property type="protein sequence ID" value="AAD18177.1"/>
    <property type="molecule type" value="Genomic_DNA"/>
</dbReference>
<dbReference type="EMBL" id="AE002161">
    <property type="protein sequence ID" value="AAF73701.1"/>
    <property type="molecule type" value="Genomic_DNA"/>
</dbReference>
<dbReference type="EMBL" id="BA000008">
    <property type="protein sequence ID" value="BAA98236.1"/>
    <property type="molecule type" value="Genomic_DNA"/>
</dbReference>
<dbReference type="EMBL" id="AE009440">
    <property type="protein sequence ID" value="AAP97961.1"/>
    <property type="molecule type" value="Genomic_DNA"/>
</dbReference>
<dbReference type="PIR" id="B86494">
    <property type="entry name" value="B86494"/>
</dbReference>
<dbReference type="PIR" id="F72129">
    <property type="entry name" value="F72129"/>
</dbReference>
<dbReference type="RefSeq" id="NP_224232.1">
    <property type="nucleotide sequence ID" value="NC_000922.1"/>
</dbReference>
<dbReference type="RefSeq" id="WP_010882674.1">
    <property type="nucleotide sequence ID" value="NZ_LN847257.1"/>
</dbReference>
<dbReference type="SMR" id="Q9Z9F7"/>
<dbReference type="STRING" id="406984.CPK_ORF00525"/>
<dbReference type="GeneID" id="45050071"/>
<dbReference type="KEGG" id="cpa:CP_0752"/>
<dbReference type="KEGG" id="cpj:xerC"/>
<dbReference type="KEGG" id="cpn:CPn_0024"/>
<dbReference type="KEGG" id="cpt:CpB0028"/>
<dbReference type="PATRIC" id="fig|115713.3.peg.31"/>
<dbReference type="eggNOG" id="COG4974">
    <property type="taxonomic scope" value="Bacteria"/>
</dbReference>
<dbReference type="HOGENOM" id="CLU_027562_9_0_0"/>
<dbReference type="OrthoDB" id="9801717at2"/>
<dbReference type="Proteomes" id="UP000000583">
    <property type="component" value="Chromosome"/>
</dbReference>
<dbReference type="Proteomes" id="UP000000801">
    <property type="component" value="Chromosome"/>
</dbReference>
<dbReference type="GO" id="GO:0005737">
    <property type="term" value="C:cytoplasm"/>
    <property type="evidence" value="ECO:0007669"/>
    <property type="project" value="UniProtKB-SubCell"/>
</dbReference>
<dbReference type="GO" id="GO:0003677">
    <property type="term" value="F:DNA binding"/>
    <property type="evidence" value="ECO:0007669"/>
    <property type="project" value="UniProtKB-KW"/>
</dbReference>
<dbReference type="GO" id="GO:0009037">
    <property type="term" value="F:tyrosine-based site-specific recombinase activity"/>
    <property type="evidence" value="ECO:0007669"/>
    <property type="project" value="UniProtKB-UniRule"/>
</dbReference>
<dbReference type="GO" id="GO:0051301">
    <property type="term" value="P:cell division"/>
    <property type="evidence" value="ECO:0007669"/>
    <property type="project" value="UniProtKB-KW"/>
</dbReference>
<dbReference type="GO" id="GO:0007059">
    <property type="term" value="P:chromosome segregation"/>
    <property type="evidence" value="ECO:0007669"/>
    <property type="project" value="UniProtKB-UniRule"/>
</dbReference>
<dbReference type="GO" id="GO:0006313">
    <property type="term" value="P:DNA transposition"/>
    <property type="evidence" value="ECO:0007669"/>
    <property type="project" value="UniProtKB-UniRule"/>
</dbReference>
<dbReference type="CDD" id="cd00798">
    <property type="entry name" value="INT_XerDC_C"/>
    <property type="match status" value="1"/>
</dbReference>
<dbReference type="Gene3D" id="1.10.150.130">
    <property type="match status" value="1"/>
</dbReference>
<dbReference type="Gene3D" id="1.10.443.10">
    <property type="entry name" value="Intergrase catalytic core"/>
    <property type="match status" value="1"/>
</dbReference>
<dbReference type="HAMAP" id="MF_01808">
    <property type="entry name" value="Recomb_XerC_XerD"/>
    <property type="match status" value="1"/>
</dbReference>
<dbReference type="InterPro" id="IPR044068">
    <property type="entry name" value="CB"/>
</dbReference>
<dbReference type="InterPro" id="IPR011010">
    <property type="entry name" value="DNA_brk_join_enz"/>
</dbReference>
<dbReference type="InterPro" id="IPR013762">
    <property type="entry name" value="Integrase-like_cat_sf"/>
</dbReference>
<dbReference type="InterPro" id="IPR002104">
    <property type="entry name" value="Integrase_catalytic"/>
</dbReference>
<dbReference type="InterPro" id="IPR010998">
    <property type="entry name" value="Integrase_recombinase_N"/>
</dbReference>
<dbReference type="InterPro" id="IPR004107">
    <property type="entry name" value="Integrase_SAM-like_N"/>
</dbReference>
<dbReference type="InterPro" id="IPR023009">
    <property type="entry name" value="Tyrosine_recombinase_XerC/XerD"/>
</dbReference>
<dbReference type="InterPro" id="IPR050090">
    <property type="entry name" value="Tyrosine_recombinase_XerCD"/>
</dbReference>
<dbReference type="PANTHER" id="PTHR30349">
    <property type="entry name" value="PHAGE INTEGRASE-RELATED"/>
    <property type="match status" value="1"/>
</dbReference>
<dbReference type="PANTHER" id="PTHR30349:SF77">
    <property type="entry name" value="TYROSINE RECOMBINASE XERC"/>
    <property type="match status" value="1"/>
</dbReference>
<dbReference type="Pfam" id="PF02899">
    <property type="entry name" value="Phage_int_SAM_1"/>
    <property type="match status" value="1"/>
</dbReference>
<dbReference type="Pfam" id="PF00589">
    <property type="entry name" value="Phage_integrase"/>
    <property type="match status" value="1"/>
</dbReference>
<dbReference type="SUPFAM" id="SSF56349">
    <property type="entry name" value="DNA breaking-rejoining enzymes"/>
    <property type="match status" value="1"/>
</dbReference>
<dbReference type="PROSITE" id="PS51900">
    <property type="entry name" value="CB"/>
    <property type="match status" value="1"/>
</dbReference>
<dbReference type="PROSITE" id="PS51898">
    <property type="entry name" value="TYR_RECOMBINASE"/>
    <property type="match status" value="1"/>
</dbReference>
<keyword id="KW-0131">Cell cycle</keyword>
<keyword id="KW-0132">Cell division</keyword>
<keyword id="KW-0159">Chromosome partition</keyword>
<keyword id="KW-0963">Cytoplasm</keyword>
<keyword id="KW-0229">DNA integration</keyword>
<keyword id="KW-0233">DNA recombination</keyword>
<keyword id="KW-0238">DNA-binding</keyword>
<reference key="1">
    <citation type="journal article" date="1999" name="Nat. Genet.">
        <title>Comparative genomes of Chlamydia pneumoniae and C. trachomatis.</title>
        <authorList>
            <person name="Kalman S."/>
            <person name="Mitchell W.P."/>
            <person name="Marathe R."/>
            <person name="Lammel C.J."/>
            <person name="Fan J."/>
            <person name="Hyman R.W."/>
            <person name="Olinger L."/>
            <person name="Grimwood J."/>
            <person name="Davis R.W."/>
            <person name="Stephens R.S."/>
        </authorList>
    </citation>
    <scope>NUCLEOTIDE SEQUENCE [LARGE SCALE GENOMIC DNA]</scope>
    <source>
        <strain>CWL029</strain>
    </source>
</reference>
<reference key="2">
    <citation type="journal article" date="2000" name="Nucleic Acids Res.">
        <title>Genome sequences of Chlamydia trachomatis MoPn and Chlamydia pneumoniae AR39.</title>
        <authorList>
            <person name="Read T.D."/>
            <person name="Brunham R.C."/>
            <person name="Shen C."/>
            <person name="Gill S.R."/>
            <person name="Heidelberg J.F."/>
            <person name="White O."/>
            <person name="Hickey E.K."/>
            <person name="Peterson J.D."/>
            <person name="Utterback T.R."/>
            <person name="Berry K.J."/>
            <person name="Bass S."/>
            <person name="Linher K.D."/>
            <person name="Weidman J.F."/>
            <person name="Khouri H.M."/>
            <person name="Craven B."/>
            <person name="Bowman C."/>
            <person name="Dodson R.J."/>
            <person name="Gwinn M.L."/>
            <person name="Nelson W.C."/>
            <person name="DeBoy R.T."/>
            <person name="Kolonay J.F."/>
            <person name="McClarty G."/>
            <person name="Salzberg S.L."/>
            <person name="Eisen J.A."/>
            <person name="Fraser C.M."/>
        </authorList>
    </citation>
    <scope>NUCLEOTIDE SEQUENCE [LARGE SCALE GENOMIC DNA]</scope>
    <source>
        <strain>AR39</strain>
    </source>
</reference>
<reference key="3">
    <citation type="journal article" date="2000" name="Nucleic Acids Res.">
        <title>Comparison of whole genome sequences of Chlamydia pneumoniae J138 from Japan and CWL029 from USA.</title>
        <authorList>
            <person name="Shirai M."/>
            <person name="Hirakawa H."/>
            <person name="Kimoto M."/>
            <person name="Tabuchi M."/>
            <person name="Kishi F."/>
            <person name="Ouchi K."/>
            <person name="Shiba T."/>
            <person name="Ishii K."/>
            <person name="Hattori M."/>
            <person name="Kuhara S."/>
            <person name="Nakazawa T."/>
        </authorList>
    </citation>
    <scope>NUCLEOTIDE SEQUENCE [LARGE SCALE GENOMIC DNA]</scope>
    <source>
        <strain>J138</strain>
    </source>
</reference>
<reference key="4">
    <citation type="submission" date="2002-05" db="EMBL/GenBank/DDBJ databases">
        <title>The genome sequence of Chlamydia pneumoniae TW183 and comparison with other Chlamydia strains based on whole genome sequence analysis.</title>
        <authorList>
            <person name="Geng M.M."/>
            <person name="Schuhmacher A."/>
            <person name="Muehldorfer I."/>
            <person name="Bensch K.W."/>
            <person name="Schaefer K.P."/>
            <person name="Schneider S."/>
            <person name="Pohl T."/>
            <person name="Essig A."/>
            <person name="Marre R."/>
            <person name="Melchers K."/>
        </authorList>
    </citation>
    <scope>NUCLEOTIDE SEQUENCE [LARGE SCALE GENOMIC DNA]</scope>
    <source>
        <strain>TW-183</strain>
    </source>
</reference>
<comment type="function">
    <text evidence="1">Site-specific tyrosine recombinase, which acts by catalyzing the cutting and rejoining of the recombining DNA molecules. The XerC-XerD complex is essential to convert dimers of the bacterial chromosome into monomers to permit their segregation at cell division. It also contributes to the segregational stability of plasmids.</text>
</comment>
<comment type="subunit">
    <text evidence="1">Forms a cyclic heterotetrameric complex composed of two molecules of XerC and two molecules of XerD.</text>
</comment>
<comment type="subcellular location">
    <subcellularLocation>
        <location evidence="1">Cytoplasm</location>
    </subcellularLocation>
</comment>
<comment type="similarity">
    <text evidence="1">Belongs to the 'phage' integrase family. XerC subfamily.</text>
</comment>
<sequence length="312" mass="35852">MIASIYSFLDYLKMVKSASPHTLRNYCLDLNGLKIFLEERGNLAPSSPLQLATEKRKVSELPFSLFTKEHVRMYIAKLIENGKAKRTIKRCLSSIKSFAHYCVIQKILLENPAETIHGPRLPKELPSPMTYAQVEVLMATPDISKYHGLRDRCLMELFYSSGLRISEIVAVNKQDFDLSTHLIRIRGKGKKERIIPVTSNAIQWIQIYLNHPDRKRLEKDPQAIFLNRFGRRISTRSIDRSFQEYLRRSGLSGHITPHTIRHTIATHWLESGMDLKTIQALLGHSSLETTTVYTQVSVKLKKQTHQEAHPHA</sequence>
<evidence type="ECO:0000255" key="1">
    <source>
        <dbReference type="HAMAP-Rule" id="MF_01808"/>
    </source>
</evidence>
<evidence type="ECO:0000255" key="2">
    <source>
        <dbReference type="PROSITE-ProRule" id="PRU01246"/>
    </source>
</evidence>
<evidence type="ECO:0000255" key="3">
    <source>
        <dbReference type="PROSITE-ProRule" id="PRU01248"/>
    </source>
</evidence>
<gene>
    <name evidence="1" type="primary">xerC</name>
    <name type="ordered locus">CPn_0024</name>
    <name type="ordered locus">CP_0752</name>
    <name type="ordered locus">CpB0028</name>
</gene>
<name>XERC_CHLPN</name>
<organism>
    <name type="scientific">Chlamydia pneumoniae</name>
    <name type="common">Chlamydophila pneumoniae</name>
    <dbReference type="NCBI Taxonomy" id="83558"/>
    <lineage>
        <taxon>Bacteria</taxon>
        <taxon>Pseudomonadati</taxon>
        <taxon>Chlamydiota</taxon>
        <taxon>Chlamydiia</taxon>
        <taxon>Chlamydiales</taxon>
        <taxon>Chlamydiaceae</taxon>
        <taxon>Chlamydia/Chlamydophila group</taxon>
        <taxon>Chlamydia</taxon>
    </lineage>
</organism>
<proteinExistence type="inferred from homology"/>
<feature type="chain" id="PRO_0000095289" description="Tyrosine recombinase XerC">
    <location>
        <begin position="1"/>
        <end position="312"/>
    </location>
</feature>
<feature type="domain" description="Core-binding (CB)" evidence="3">
    <location>
        <begin position="1"/>
        <end position="103"/>
    </location>
</feature>
<feature type="domain" description="Tyr recombinase" evidence="2">
    <location>
        <begin position="124"/>
        <end position="306"/>
    </location>
</feature>
<feature type="active site" evidence="1">
    <location>
        <position position="164"/>
    </location>
</feature>
<feature type="active site" evidence="1">
    <location>
        <position position="188"/>
    </location>
</feature>
<feature type="active site" evidence="1">
    <location>
        <position position="258"/>
    </location>
</feature>
<feature type="active site" evidence="1">
    <location>
        <position position="261"/>
    </location>
</feature>
<feature type="active site" evidence="1">
    <location>
        <position position="284"/>
    </location>
</feature>
<feature type="active site" description="O-(3'-phospho-DNA)-tyrosine intermediate" evidence="1">
    <location>
        <position position="293"/>
    </location>
</feature>
<protein>
    <recommendedName>
        <fullName evidence="1">Tyrosine recombinase XerC</fullName>
    </recommendedName>
</protein>
<accession>Q9Z9F7</accession>